<comment type="function">
    <text evidence="1">Produces ATP from ADP in the presence of a proton gradient across the membrane. The alpha chain is a regulatory subunit.</text>
</comment>
<comment type="catalytic activity">
    <reaction evidence="1">
        <text>ATP + H2O + 4 H(+)(in) = ADP + phosphate + 5 H(+)(out)</text>
        <dbReference type="Rhea" id="RHEA:57720"/>
        <dbReference type="ChEBI" id="CHEBI:15377"/>
        <dbReference type="ChEBI" id="CHEBI:15378"/>
        <dbReference type="ChEBI" id="CHEBI:30616"/>
        <dbReference type="ChEBI" id="CHEBI:43474"/>
        <dbReference type="ChEBI" id="CHEBI:456216"/>
        <dbReference type="EC" id="7.1.2.2"/>
    </reaction>
</comment>
<comment type="subunit">
    <text evidence="1">F-type ATPases have 2 components, CF(1) - the catalytic core - and CF(0) - the membrane proton channel. CF(1) has five subunits: alpha(3), beta(3), gamma(1), delta(1), epsilon(1). CF(0) has four main subunits: a, b, b' and c.</text>
</comment>
<comment type="subcellular location">
    <subcellularLocation>
        <location evidence="1">Plastid</location>
        <location evidence="1">Chloroplast thylakoid membrane</location>
        <topology evidence="1">Peripheral membrane protein</topology>
    </subcellularLocation>
</comment>
<comment type="similarity">
    <text evidence="1">Belongs to the ATPase alpha/beta chains family.</text>
</comment>
<name>ATPA_CYCTA</name>
<protein>
    <recommendedName>
        <fullName evidence="1">ATP synthase subunit alpha, chloroplastic</fullName>
        <ecNumber evidence="1">7.1.2.2</ecNumber>
    </recommendedName>
    <alternativeName>
        <fullName evidence="1">ATP synthase F1 sector subunit alpha</fullName>
    </alternativeName>
    <alternativeName>
        <fullName evidence="1">F-ATPase subunit alpha</fullName>
    </alternativeName>
</protein>
<feature type="chain" id="PRO_0000339084" description="ATP synthase subunit alpha, chloroplastic">
    <location>
        <begin position="1"/>
        <end position="507"/>
    </location>
</feature>
<feature type="binding site" evidence="1">
    <location>
        <begin position="170"/>
        <end position="177"/>
    </location>
    <ligand>
        <name>ATP</name>
        <dbReference type="ChEBI" id="CHEBI:30616"/>
    </ligand>
</feature>
<feature type="site" description="Required for activity" evidence="1">
    <location>
        <position position="363"/>
    </location>
</feature>
<proteinExistence type="inferred from homology"/>
<evidence type="ECO:0000255" key="1">
    <source>
        <dbReference type="HAMAP-Rule" id="MF_01346"/>
    </source>
</evidence>
<dbReference type="EC" id="7.1.2.2" evidence="1"/>
<dbReference type="EMBL" id="AP009339">
    <property type="protein sequence ID" value="BAF64917.1"/>
    <property type="molecule type" value="Genomic_DNA"/>
</dbReference>
<dbReference type="RefSeq" id="YP_001312176.1">
    <property type="nucleotide sequence ID" value="NC_009618.1"/>
</dbReference>
<dbReference type="SMR" id="A6H5F1"/>
<dbReference type="GeneID" id="5309607"/>
<dbReference type="GO" id="GO:0009535">
    <property type="term" value="C:chloroplast thylakoid membrane"/>
    <property type="evidence" value="ECO:0007669"/>
    <property type="project" value="UniProtKB-SubCell"/>
</dbReference>
<dbReference type="GO" id="GO:0045259">
    <property type="term" value="C:proton-transporting ATP synthase complex"/>
    <property type="evidence" value="ECO:0007669"/>
    <property type="project" value="UniProtKB-KW"/>
</dbReference>
<dbReference type="GO" id="GO:0043531">
    <property type="term" value="F:ADP binding"/>
    <property type="evidence" value="ECO:0007669"/>
    <property type="project" value="TreeGrafter"/>
</dbReference>
<dbReference type="GO" id="GO:0005524">
    <property type="term" value="F:ATP binding"/>
    <property type="evidence" value="ECO:0007669"/>
    <property type="project" value="UniProtKB-UniRule"/>
</dbReference>
<dbReference type="GO" id="GO:0046933">
    <property type="term" value="F:proton-transporting ATP synthase activity, rotational mechanism"/>
    <property type="evidence" value="ECO:0007669"/>
    <property type="project" value="UniProtKB-UniRule"/>
</dbReference>
<dbReference type="CDD" id="cd18113">
    <property type="entry name" value="ATP-synt_F1_alpha_C"/>
    <property type="match status" value="1"/>
</dbReference>
<dbReference type="CDD" id="cd18116">
    <property type="entry name" value="ATP-synt_F1_alpha_N"/>
    <property type="match status" value="1"/>
</dbReference>
<dbReference type="CDD" id="cd01132">
    <property type="entry name" value="F1-ATPase_alpha_CD"/>
    <property type="match status" value="1"/>
</dbReference>
<dbReference type="FunFam" id="1.20.150.20:FF:000001">
    <property type="entry name" value="ATP synthase subunit alpha"/>
    <property type="match status" value="1"/>
</dbReference>
<dbReference type="FunFam" id="2.40.30.20:FF:000001">
    <property type="entry name" value="ATP synthase subunit alpha"/>
    <property type="match status" value="1"/>
</dbReference>
<dbReference type="FunFam" id="3.40.50.300:FF:000002">
    <property type="entry name" value="ATP synthase subunit alpha"/>
    <property type="match status" value="1"/>
</dbReference>
<dbReference type="Gene3D" id="2.40.30.20">
    <property type="match status" value="1"/>
</dbReference>
<dbReference type="Gene3D" id="1.20.150.20">
    <property type="entry name" value="ATP synthase alpha/beta chain, C-terminal domain"/>
    <property type="match status" value="1"/>
</dbReference>
<dbReference type="Gene3D" id="3.40.50.300">
    <property type="entry name" value="P-loop containing nucleotide triphosphate hydrolases"/>
    <property type="match status" value="1"/>
</dbReference>
<dbReference type="HAMAP" id="MF_01346">
    <property type="entry name" value="ATP_synth_alpha_bact"/>
    <property type="match status" value="1"/>
</dbReference>
<dbReference type="InterPro" id="IPR023366">
    <property type="entry name" value="ATP_synth_asu-like_sf"/>
</dbReference>
<dbReference type="InterPro" id="IPR000793">
    <property type="entry name" value="ATP_synth_asu_C"/>
</dbReference>
<dbReference type="InterPro" id="IPR038376">
    <property type="entry name" value="ATP_synth_asu_C_sf"/>
</dbReference>
<dbReference type="InterPro" id="IPR033732">
    <property type="entry name" value="ATP_synth_F1_a_nt-bd_dom"/>
</dbReference>
<dbReference type="InterPro" id="IPR005294">
    <property type="entry name" value="ATP_synth_F1_asu"/>
</dbReference>
<dbReference type="InterPro" id="IPR020003">
    <property type="entry name" value="ATPase_a/bsu_AS"/>
</dbReference>
<dbReference type="InterPro" id="IPR004100">
    <property type="entry name" value="ATPase_F1/V1/A1_a/bsu_N"/>
</dbReference>
<dbReference type="InterPro" id="IPR036121">
    <property type="entry name" value="ATPase_F1/V1/A1_a/bsu_N_sf"/>
</dbReference>
<dbReference type="InterPro" id="IPR000194">
    <property type="entry name" value="ATPase_F1/V1/A1_a/bsu_nucl-bd"/>
</dbReference>
<dbReference type="InterPro" id="IPR027417">
    <property type="entry name" value="P-loop_NTPase"/>
</dbReference>
<dbReference type="NCBIfam" id="TIGR00962">
    <property type="entry name" value="atpA"/>
    <property type="match status" value="1"/>
</dbReference>
<dbReference type="NCBIfam" id="NF009884">
    <property type="entry name" value="PRK13343.1"/>
    <property type="match status" value="1"/>
</dbReference>
<dbReference type="PANTHER" id="PTHR48082">
    <property type="entry name" value="ATP SYNTHASE SUBUNIT ALPHA, MITOCHONDRIAL"/>
    <property type="match status" value="1"/>
</dbReference>
<dbReference type="PANTHER" id="PTHR48082:SF2">
    <property type="entry name" value="ATP SYNTHASE SUBUNIT ALPHA, MITOCHONDRIAL"/>
    <property type="match status" value="1"/>
</dbReference>
<dbReference type="Pfam" id="PF00006">
    <property type="entry name" value="ATP-synt_ab"/>
    <property type="match status" value="1"/>
</dbReference>
<dbReference type="Pfam" id="PF00306">
    <property type="entry name" value="ATP-synt_ab_C"/>
    <property type="match status" value="1"/>
</dbReference>
<dbReference type="Pfam" id="PF02874">
    <property type="entry name" value="ATP-synt_ab_N"/>
    <property type="match status" value="1"/>
</dbReference>
<dbReference type="PIRSF" id="PIRSF039088">
    <property type="entry name" value="F_ATPase_subunit_alpha"/>
    <property type="match status" value="1"/>
</dbReference>
<dbReference type="SUPFAM" id="SSF47917">
    <property type="entry name" value="C-terminal domain of alpha and beta subunits of F1 ATP synthase"/>
    <property type="match status" value="1"/>
</dbReference>
<dbReference type="SUPFAM" id="SSF50615">
    <property type="entry name" value="N-terminal domain of alpha and beta subunits of F1 ATP synthase"/>
    <property type="match status" value="1"/>
</dbReference>
<dbReference type="SUPFAM" id="SSF52540">
    <property type="entry name" value="P-loop containing nucleoside triphosphate hydrolases"/>
    <property type="match status" value="1"/>
</dbReference>
<dbReference type="PROSITE" id="PS00152">
    <property type="entry name" value="ATPASE_ALPHA_BETA"/>
    <property type="match status" value="1"/>
</dbReference>
<keyword id="KW-0066">ATP synthesis</keyword>
<keyword id="KW-0067">ATP-binding</keyword>
<keyword id="KW-0139">CF(1)</keyword>
<keyword id="KW-0150">Chloroplast</keyword>
<keyword id="KW-0375">Hydrogen ion transport</keyword>
<keyword id="KW-0406">Ion transport</keyword>
<keyword id="KW-0472">Membrane</keyword>
<keyword id="KW-0547">Nucleotide-binding</keyword>
<keyword id="KW-0934">Plastid</keyword>
<keyword id="KW-0793">Thylakoid</keyword>
<keyword id="KW-1278">Translocase</keyword>
<keyword id="KW-0813">Transport</keyword>
<organism>
    <name type="scientific">Cycas taitungensis</name>
    <name type="common">Prince sago</name>
    <name type="synonym">Cycas taiwaniana</name>
    <dbReference type="NCBI Taxonomy" id="54799"/>
    <lineage>
        <taxon>Eukaryota</taxon>
        <taxon>Viridiplantae</taxon>
        <taxon>Streptophyta</taxon>
        <taxon>Embryophyta</taxon>
        <taxon>Tracheophyta</taxon>
        <taxon>Spermatophyta</taxon>
        <taxon>Cycadidae</taxon>
        <taxon>Cycadales</taxon>
        <taxon>Cycadaceae</taxon>
        <taxon>Cycas</taxon>
    </lineage>
</organism>
<reference key="1">
    <citation type="journal article" date="2007" name="Mol. Biol. Evol.">
        <title>Chloroplast genome (cpDNA) of Cycas taitungensis and 56 cp protein-coding genes of Gnetum parvifolium: insights into cpDNA evolution and phylogeny of extant seed plants.</title>
        <authorList>
            <person name="Wu C.-S."/>
            <person name="Wang Y.-N."/>
            <person name="Liu S.-M."/>
            <person name="Chaw S.-M."/>
        </authorList>
    </citation>
    <scope>NUCLEOTIDE SEQUENCE [LARGE SCALE GENOMIC DNA]</scope>
</reference>
<accession>A6H5F1</accession>
<gene>
    <name evidence="1" type="primary">atpA</name>
</gene>
<sequence length="507" mass="55336">MVTIRPDEISSIIRKQIKQYNQEVEVVNIGIVLQVGDGIARIHGLDEVMAGELVEFEDGTVGIALNLESNNVGAVLMGDGLMIQEGSSVRATGKIAQIPVSDAYSGRVVNALAQPIDGRGKITASESRSIESPAPGIISRRSVYEPLQTGLIAIDSMIPIGRGQRELIIGDRQTGKTAVATDTIINQKGQDVICVYVAIGQKASSVAQVVNIFQERGAMEYTIVVAETADSPATLQYLAPYTGAALAEYFMYKEQHTLIIYDDLSKQARAYRQMSLLLRRPPGREAYPGDVFYLHSRLLERAAKLSSQLGEGSMTALPIVETQAGDVSAYIPTNVISITDGQIFLSADLFNAGIRPAINVGISVSRVGSAAQIKAMKQVAGKLKLELAQFAELEAFAQFASDLDRATQNQLARGQRLRELLKQSQSAPLTVEEQIATIYAGANGYLDILEIVQVRKFLVQLREYLITNKPQFGEIIRSTRAFTEQAEALLKEAIQEHIELFLLREQK</sequence>
<geneLocation type="chloroplast"/>